<name>PELO_DANRE</name>
<accession>Q7ZWC4</accession>
<protein>
    <recommendedName>
        <fullName>Protein pelota homolog</fullName>
    </recommendedName>
</protein>
<dbReference type="EMBL" id="BC049484">
    <property type="protein sequence ID" value="AAH49484.1"/>
    <property type="molecule type" value="mRNA"/>
</dbReference>
<dbReference type="RefSeq" id="NP_957430.1">
    <property type="nucleotide sequence ID" value="NM_201136.1"/>
</dbReference>
<dbReference type="SMR" id="Q7ZWC4"/>
<dbReference type="FunCoup" id="Q7ZWC4">
    <property type="interactions" value="1700"/>
</dbReference>
<dbReference type="STRING" id="7955.ENSDARP00000072295"/>
<dbReference type="PaxDb" id="7955-ENSDARP00000072295"/>
<dbReference type="Ensembl" id="ENSDART00000077829">
    <property type="protein sequence ID" value="ENSDARP00000072295"/>
    <property type="gene ID" value="ENSDARG00000055477"/>
</dbReference>
<dbReference type="GeneID" id="394111"/>
<dbReference type="KEGG" id="dre:394111"/>
<dbReference type="AGR" id="ZFIN:ZDB-GENE-040426-1074"/>
<dbReference type="CTD" id="53918"/>
<dbReference type="ZFIN" id="ZDB-GENE-040426-1074">
    <property type="gene designation" value="pelo"/>
</dbReference>
<dbReference type="eggNOG" id="KOG2869">
    <property type="taxonomic scope" value="Eukaryota"/>
</dbReference>
<dbReference type="HOGENOM" id="CLU_023334_3_1_1"/>
<dbReference type="InParanoid" id="Q7ZWC4"/>
<dbReference type="OMA" id="DDLWHLK"/>
<dbReference type="OrthoDB" id="10249111at2759"/>
<dbReference type="PhylomeDB" id="Q7ZWC4"/>
<dbReference type="TreeFam" id="TF105733"/>
<dbReference type="PRO" id="PR:Q7ZWC4"/>
<dbReference type="Proteomes" id="UP000000437">
    <property type="component" value="Chromosome 12"/>
</dbReference>
<dbReference type="Bgee" id="ENSDARG00000055477">
    <property type="expression patterns" value="Expressed in somite and 27 other cell types or tissues"/>
</dbReference>
<dbReference type="ExpressionAtlas" id="Q7ZWC4">
    <property type="expression patterns" value="baseline and differential"/>
</dbReference>
<dbReference type="GO" id="GO:0005737">
    <property type="term" value="C:cytoplasm"/>
    <property type="evidence" value="ECO:0000318"/>
    <property type="project" value="GO_Central"/>
</dbReference>
<dbReference type="GO" id="GO:1990533">
    <property type="term" value="C:Dom34-Hbs1 complex"/>
    <property type="evidence" value="ECO:0000250"/>
    <property type="project" value="UniProtKB"/>
</dbReference>
<dbReference type="GO" id="GO:0046872">
    <property type="term" value="F:metal ion binding"/>
    <property type="evidence" value="ECO:0007669"/>
    <property type="project" value="UniProtKB-KW"/>
</dbReference>
<dbReference type="GO" id="GO:0043022">
    <property type="term" value="F:ribosome binding"/>
    <property type="evidence" value="ECO:0000250"/>
    <property type="project" value="UniProtKB"/>
</dbReference>
<dbReference type="GO" id="GO:0051301">
    <property type="term" value="P:cell division"/>
    <property type="evidence" value="ECO:0007669"/>
    <property type="project" value="UniProtKB-KW"/>
</dbReference>
<dbReference type="GO" id="GO:0070651">
    <property type="term" value="P:nonfunctional rRNA decay"/>
    <property type="evidence" value="ECO:0000318"/>
    <property type="project" value="GO_Central"/>
</dbReference>
<dbReference type="GO" id="GO:0070966">
    <property type="term" value="P:nuclear-transcribed mRNA catabolic process, no-go decay"/>
    <property type="evidence" value="ECO:0000250"/>
    <property type="project" value="UniProtKB"/>
</dbReference>
<dbReference type="GO" id="GO:0070481">
    <property type="term" value="P:nuclear-transcribed mRNA catabolic process, non-stop decay"/>
    <property type="evidence" value="ECO:0007669"/>
    <property type="project" value="InterPro"/>
</dbReference>
<dbReference type="GO" id="GO:0072344">
    <property type="term" value="P:rescue of stalled ribosome"/>
    <property type="evidence" value="ECO:0000250"/>
    <property type="project" value="UniProtKB"/>
</dbReference>
<dbReference type="GO" id="GO:0032790">
    <property type="term" value="P:ribosome disassembly"/>
    <property type="evidence" value="ECO:0000250"/>
    <property type="project" value="UniProtKB"/>
</dbReference>
<dbReference type="GO" id="GO:0071025">
    <property type="term" value="P:RNA surveillance"/>
    <property type="evidence" value="ECO:0007669"/>
    <property type="project" value="InterPro"/>
</dbReference>
<dbReference type="FunFam" id="2.30.30.870:FF:000001">
    <property type="entry name" value="Protein pelota homolog"/>
    <property type="match status" value="1"/>
</dbReference>
<dbReference type="FunFam" id="3.30.1330.30:FF:000008">
    <property type="entry name" value="Protein pelota homolog"/>
    <property type="match status" value="1"/>
</dbReference>
<dbReference type="FunFam" id="3.30.420.60:FF:000002">
    <property type="entry name" value="Protein pelota homolog"/>
    <property type="match status" value="1"/>
</dbReference>
<dbReference type="Gene3D" id="3.30.1330.30">
    <property type="match status" value="1"/>
</dbReference>
<dbReference type="Gene3D" id="3.30.420.60">
    <property type="entry name" value="eRF1 domain 2"/>
    <property type="match status" value="1"/>
</dbReference>
<dbReference type="Gene3D" id="2.30.30.870">
    <property type="entry name" value="Pelota, domain A"/>
    <property type="match status" value="1"/>
</dbReference>
<dbReference type="InterPro" id="IPR042226">
    <property type="entry name" value="eFR1_2_sf"/>
</dbReference>
<dbReference type="InterPro" id="IPR005140">
    <property type="entry name" value="eRF1_1_Pelota"/>
</dbReference>
<dbReference type="InterPro" id="IPR005141">
    <property type="entry name" value="eRF1_2"/>
</dbReference>
<dbReference type="InterPro" id="IPR005142">
    <property type="entry name" value="eRF1_3"/>
</dbReference>
<dbReference type="InterPro" id="IPR038069">
    <property type="entry name" value="Pelota/DOM34_N"/>
</dbReference>
<dbReference type="InterPro" id="IPR029064">
    <property type="entry name" value="Ribosomal_eL30-like_sf"/>
</dbReference>
<dbReference type="InterPro" id="IPR004405">
    <property type="entry name" value="Transl-rel_pelota"/>
</dbReference>
<dbReference type="NCBIfam" id="TIGR00111">
    <property type="entry name" value="pelota"/>
    <property type="match status" value="1"/>
</dbReference>
<dbReference type="PANTHER" id="PTHR10853">
    <property type="entry name" value="PELOTA"/>
    <property type="match status" value="1"/>
</dbReference>
<dbReference type="PANTHER" id="PTHR10853:SF0">
    <property type="entry name" value="PROTEIN PELOTA HOMOLOG"/>
    <property type="match status" value="1"/>
</dbReference>
<dbReference type="Pfam" id="PF03463">
    <property type="entry name" value="eRF1_1"/>
    <property type="match status" value="1"/>
</dbReference>
<dbReference type="Pfam" id="PF03464">
    <property type="entry name" value="eRF1_2"/>
    <property type="match status" value="1"/>
</dbReference>
<dbReference type="Pfam" id="PF03465">
    <property type="entry name" value="eRF1_3"/>
    <property type="match status" value="1"/>
</dbReference>
<dbReference type="SMART" id="SM01194">
    <property type="entry name" value="eRF1_1"/>
    <property type="match status" value="1"/>
</dbReference>
<dbReference type="SUPFAM" id="SSF159065">
    <property type="entry name" value="Dom34/Pelota N-terminal domain-like"/>
    <property type="match status" value="1"/>
</dbReference>
<dbReference type="SUPFAM" id="SSF55315">
    <property type="entry name" value="L30e-like"/>
    <property type="match status" value="1"/>
</dbReference>
<dbReference type="SUPFAM" id="SSF53137">
    <property type="entry name" value="Translational machinery components"/>
    <property type="match status" value="1"/>
</dbReference>
<sequence length="385" mass="43081">MKLVHKDIEKDNAGQVTLIPDEAEDMWHTYNLLQVGDSLRASTIRKVQTESSTGSVGSSRVRTTLTLCVETIDFDSQACQLRVKGTNIQENQYVKMGAYHTIELELNRKFTLAKKVWDSVVLDRIEQACDPAQKADVAAVVMQEGLANLVLVTPAMTLLRAKVEVTIPRKRKGSCTQHDKALERFYEAVMQGILRHFNFDVVKCILVASPGFVKDQFISYLFKEAVRQDCKLLLENRSKFMVVHSSSGHKYSLKEVLCDPAVTARLSDTKAAGEVKALEDFYKMLQQEPDRAFYGLAHVERASEALAIDILLISDTLFRHQDVATRGRYVRLVDNVKENGGTVRIFSSLHVSGEQLNQLSGVAAILRFPIADVSEPEENSSSDED</sequence>
<gene>
    <name type="primary">pelo</name>
</gene>
<keyword id="KW-0131">Cell cycle</keyword>
<keyword id="KW-0132">Cell division</keyword>
<keyword id="KW-0963">Cytoplasm</keyword>
<keyword id="KW-0479">Metal-binding</keyword>
<keyword id="KW-1185">Reference proteome</keyword>
<organism>
    <name type="scientific">Danio rerio</name>
    <name type="common">Zebrafish</name>
    <name type="synonym">Brachydanio rerio</name>
    <dbReference type="NCBI Taxonomy" id="7955"/>
    <lineage>
        <taxon>Eukaryota</taxon>
        <taxon>Metazoa</taxon>
        <taxon>Chordata</taxon>
        <taxon>Craniata</taxon>
        <taxon>Vertebrata</taxon>
        <taxon>Euteleostomi</taxon>
        <taxon>Actinopterygii</taxon>
        <taxon>Neopterygii</taxon>
        <taxon>Teleostei</taxon>
        <taxon>Ostariophysi</taxon>
        <taxon>Cypriniformes</taxon>
        <taxon>Danionidae</taxon>
        <taxon>Danioninae</taxon>
        <taxon>Danio</taxon>
    </lineage>
</organism>
<evidence type="ECO:0000250" key="1">
    <source>
        <dbReference type="UniProtKB" id="P33309"/>
    </source>
</evidence>
<evidence type="ECO:0000250" key="2">
    <source>
        <dbReference type="UniProtKB" id="Q9BRX2"/>
    </source>
</evidence>
<evidence type="ECO:0000305" key="3"/>
<reference key="1">
    <citation type="submission" date="2003-03" db="EMBL/GenBank/DDBJ databases">
        <authorList>
            <consortium name="NIH - Zebrafish Gene Collection (ZGC) project"/>
        </authorList>
    </citation>
    <scope>NUCLEOTIDE SEQUENCE [LARGE SCALE MRNA]</scope>
</reference>
<proteinExistence type="evidence at transcript level"/>
<comment type="function">
    <text evidence="2">Component of the Pelota-HBS1L complex, a complex that recognizes stalled ribosomes and triggers the No-Go Decay (NGD) pathway. In the Pelota-HBS1L complex, PELO recognizes ribosomes stalled at the 3' end of an mRNA and engages stalled ribosomes by destabilizing mRNA in the mRNA channel. Following mRNA extraction from stalled ribosomes by the SKI complex, the Pelota-HBS1L complex promotes recruitment of ABCE1, which drives the disassembly of stalled ribosomes, followed by degradation of damaged mRNAs as part of the NGD pathway.</text>
</comment>
<comment type="cofactor">
    <cofactor evidence="1">
        <name>a divalent metal cation</name>
        <dbReference type="ChEBI" id="CHEBI:60240"/>
    </cofactor>
</comment>
<comment type="subunit">
    <text evidence="2">Component of the Pelota-HBS1L complex, also named Dom34-Hbs1 complex, composed of PELO and HBS1L.</text>
</comment>
<comment type="subcellular location">
    <subcellularLocation>
        <location evidence="2">Cytoplasm</location>
    </subcellularLocation>
</comment>
<comment type="similarity">
    <text evidence="3">Belongs to the eukaryotic release factor 1 family. Pelota subfamily.</text>
</comment>
<feature type="chain" id="PRO_0000232838" description="Protein pelota homolog">
    <location>
        <begin position="1"/>
        <end position="385"/>
    </location>
</feature>